<sequence>MFVKTGDKVKVIAGKDKGKEGTVLSVNAKTNRIVVKGVNKIKKHEKPSQANANGGVVEKEGSIHASNVKVIAKKEDNNK</sequence>
<keyword id="KW-0687">Ribonucleoprotein</keyword>
<keyword id="KW-0689">Ribosomal protein</keyword>
<keyword id="KW-0694">RNA-binding</keyword>
<keyword id="KW-0699">rRNA-binding</keyword>
<dbReference type="EMBL" id="CP000413">
    <property type="protein sequence ID" value="ABJ59708.1"/>
    <property type="molecule type" value="Genomic_DNA"/>
</dbReference>
<dbReference type="RefSeq" id="WP_003647825.1">
    <property type="nucleotide sequence ID" value="NZ_WBMG01000001.1"/>
</dbReference>
<dbReference type="SMR" id="Q046B4"/>
<dbReference type="GeneID" id="48924313"/>
<dbReference type="KEGG" id="lga:LGAS_0302"/>
<dbReference type="HOGENOM" id="CLU_093315_3_0_9"/>
<dbReference type="BioCyc" id="LGAS324831:G1G6Y-300-MONOMER"/>
<dbReference type="Proteomes" id="UP000000664">
    <property type="component" value="Chromosome"/>
</dbReference>
<dbReference type="GO" id="GO:1990904">
    <property type="term" value="C:ribonucleoprotein complex"/>
    <property type="evidence" value="ECO:0007669"/>
    <property type="project" value="UniProtKB-KW"/>
</dbReference>
<dbReference type="GO" id="GO:0005840">
    <property type="term" value="C:ribosome"/>
    <property type="evidence" value="ECO:0007669"/>
    <property type="project" value="UniProtKB-KW"/>
</dbReference>
<dbReference type="GO" id="GO:0019843">
    <property type="term" value="F:rRNA binding"/>
    <property type="evidence" value="ECO:0007669"/>
    <property type="project" value="UniProtKB-UniRule"/>
</dbReference>
<dbReference type="GO" id="GO:0003735">
    <property type="term" value="F:structural constituent of ribosome"/>
    <property type="evidence" value="ECO:0007669"/>
    <property type="project" value="InterPro"/>
</dbReference>
<dbReference type="GO" id="GO:0006412">
    <property type="term" value="P:translation"/>
    <property type="evidence" value="ECO:0007669"/>
    <property type="project" value="UniProtKB-UniRule"/>
</dbReference>
<dbReference type="CDD" id="cd06089">
    <property type="entry name" value="KOW_RPL26"/>
    <property type="match status" value="1"/>
</dbReference>
<dbReference type="Gene3D" id="2.30.30.30">
    <property type="match status" value="1"/>
</dbReference>
<dbReference type="HAMAP" id="MF_01326_B">
    <property type="entry name" value="Ribosomal_uL24_B"/>
    <property type="match status" value="1"/>
</dbReference>
<dbReference type="InterPro" id="IPR005824">
    <property type="entry name" value="KOW"/>
</dbReference>
<dbReference type="InterPro" id="IPR014722">
    <property type="entry name" value="Rib_uL2_dom2"/>
</dbReference>
<dbReference type="InterPro" id="IPR003256">
    <property type="entry name" value="Ribosomal_uL24"/>
</dbReference>
<dbReference type="InterPro" id="IPR005825">
    <property type="entry name" value="Ribosomal_uL24_CS"/>
</dbReference>
<dbReference type="InterPro" id="IPR041988">
    <property type="entry name" value="Ribosomal_uL24_KOW"/>
</dbReference>
<dbReference type="InterPro" id="IPR008991">
    <property type="entry name" value="Translation_prot_SH3-like_sf"/>
</dbReference>
<dbReference type="NCBIfam" id="TIGR01079">
    <property type="entry name" value="rplX_bact"/>
    <property type="match status" value="1"/>
</dbReference>
<dbReference type="PANTHER" id="PTHR12903">
    <property type="entry name" value="MITOCHONDRIAL RIBOSOMAL PROTEIN L24"/>
    <property type="match status" value="1"/>
</dbReference>
<dbReference type="Pfam" id="PF00467">
    <property type="entry name" value="KOW"/>
    <property type="match status" value="1"/>
</dbReference>
<dbReference type="Pfam" id="PF17136">
    <property type="entry name" value="ribosomal_L24"/>
    <property type="match status" value="1"/>
</dbReference>
<dbReference type="SMART" id="SM00739">
    <property type="entry name" value="KOW"/>
    <property type="match status" value="1"/>
</dbReference>
<dbReference type="SUPFAM" id="SSF50104">
    <property type="entry name" value="Translation proteins SH3-like domain"/>
    <property type="match status" value="1"/>
</dbReference>
<dbReference type="PROSITE" id="PS01108">
    <property type="entry name" value="RIBOSOMAL_L24"/>
    <property type="match status" value="1"/>
</dbReference>
<feature type="chain" id="PRO_1000052236" description="Large ribosomal subunit protein uL24">
    <location>
        <begin position="1"/>
        <end position="79"/>
    </location>
</feature>
<gene>
    <name evidence="1" type="primary">rplX</name>
    <name type="ordered locus">LGAS_0302</name>
</gene>
<comment type="function">
    <text evidence="1">One of two assembly initiator proteins, it binds directly to the 5'-end of the 23S rRNA, where it nucleates assembly of the 50S subunit.</text>
</comment>
<comment type="function">
    <text evidence="1">One of the proteins that surrounds the polypeptide exit tunnel on the outside of the subunit.</text>
</comment>
<comment type="subunit">
    <text evidence="1">Part of the 50S ribosomal subunit.</text>
</comment>
<comment type="similarity">
    <text evidence="1">Belongs to the universal ribosomal protein uL24 family.</text>
</comment>
<name>RL24_LACGA</name>
<evidence type="ECO:0000255" key="1">
    <source>
        <dbReference type="HAMAP-Rule" id="MF_01326"/>
    </source>
</evidence>
<evidence type="ECO:0000305" key="2"/>
<reference key="1">
    <citation type="journal article" date="2006" name="Proc. Natl. Acad. Sci. U.S.A.">
        <title>Comparative genomics of the lactic acid bacteria.</title>
        <authorList>
            <person name="Makarova K.S."/>
            <person name="Slesarev A."/>
            <person name="Wolf Y.I."/>
            <person name="Sorokin A."/>
            <person name="Mirkin B."/>
            <person name="Koonin E.V."/>
            <person name="Pavlov A."/>
            <person name="Pavlova N."/>
            <person name="Karamychev V."/>
            <person name="Polouchine N."/>
            <person name="Shakhova V."/>
            <person name="Grigoriev I."/>
            <person name="Lou Y."/>
            <person name="Rohksar D."/>
            <person name="Lucas S."/>
            <person name="Huang K."/>
            <person name="Goodstein D.M."/>
            <person name="Hawkins T."/>
            <person name="Plengvidhya V."/>
            <person name="Welker D."/>
            <person name="Hughes J."/>
            <person name="Goh Y."/>
            <person name="Benson A."/>
            <person name="Baldwin K."/>
            <person name="Lee J.-H."/>
            <person name="Diaz-Muniz I."/>
            <person name="Dosti B."/>
            <person name="Smeianov V."/>
            <person name="Wechter W."/>
            <person name="Barabote R."/>
            <person name="Lorca G."/>
            <person name="Altermann E."/>
            <person name="Barrangou R."/>
            <person name="Ganesan B."/>
            <person name="Xie Y."/>
            <person name="Rawsthorne H."/>
            <person name="Tamir D."/>
            <person name="Parker C."/>
            <person name="Breidt F."/>
            <person name="Broadbent J.R."/>
            <person name="Hutkins R."/>
            <person name="O'Sullivan D."/>
            <person name="Steele J."/>
            <person name="Unlu G."/>
            <person name="Saier M.H. Jr."/>
            <person name="Klaenhammer T."/>
            <person name="Richardson P."/>
            <person name="Kozyavkin S."/>
            <person name="Weimer B.C."/>
            <person name="Mills D.A."/>
        </authorList>
    </citation>
    <scope>NUCLEOTIDE SEQUENCE [LARGE SCALE GENOMIC DNA]</scope>
    <source>
        <strain>ATCC 33323 / DSM 20243 / BCRC 14619 / CIP 102991 / JCM 1131 / KCTC 3163 / NCIMB 11718 / NCTC 13722 / AM63</strain>
    </source>
</reference>
<protein>
    <recommendedName>
        <fullName evidence="1">Large ribosomal subunit protein uL24</fullName>
    </recommendedName>
    <alternativeName>
        <fullName evidence="2">50S ribosomal protein L24</fullName>
    </alternativeName>
</protein>
<accession>Q046B4</accession>
<organism>
    <name type="scientific">Lactobacillus gasseri (strain ATCC 33323 / DSM 20243 / BCRC 14619 / CIP 102991 / JCM 1131 / KCTC 3163 / NCIMB 11718 / NCTC 13722 / AM63)</name>
    <dbReference type="NCBI Taxonomy" id="324831"/>
    <lineage>
        <taxon>Bacteria</taxon>
        <taxon>Bacillati</taxon>
        <taxon>Bacillota</taxon>
        <taxon>Bacilli</taxon>
        <taxon>Lactobacillales</taxon>
        <taxon>Lactobacillaceae</taxon>
        <taxon>Lactobacillus</taxon>
    </lineage>
</organism>
<proteinExistence type="inferred from homology"/>